<feature type="chain" id="PRO_0000308607" description="Protein virilizer">
    <location>
        <begin position="1"/>
        <end position="1854"/>
    </location>
</feature>
<feature type="region of interest" description="Disordered" evidence="2">
    <location>
        <begin position="202"/>
        <end position="361"/>
    </location>
</feature>
<feature type="region of interest" description="Disordered" evidence="2">
    <location>
        <begin position="777"/>
        <end position="821"/>
    </location>
</feature>
<feature type="region of interest" description="Disordered" evidence="2">
    <location>
        <begin position="1570"/>
        <end position="1589"/>
    </location>
</feature>
<feature type="region of interest" description="Disordered" evidence="2">
    <location>
        <begin position="1720"/>
        <end position="1788"/>
    </location>
</feature>
<feature type="region of interest" description="Disordered" evidence="2">
    <location>
        <begin position="1804"/>
        <end position="1854"/>
    </location>
</feature>
<feature type="coiled-coil region" evidence="1">
    <location>
        <begin position="779"/>
        <end position="808"/>
    </location>
</feature>
<feature type="compositionally biased region" description="Basic and acidic residues" evidence="2">
    <location>
        <begin position="202"/>
        <end position="214"/>
    </location>
</feature>
<feature type="compositionally biased region" description="Basic and acidic residues" evidence="2">
    <location>
        <begin position="236"/>
        <end position="259"/>
    </location>
</feature>
<feature type="compositionally biased region" description="Basic and acidic residues" evidence="2">
    <location>
        <begin position="275"/>
        <end position="285"/>
    </location>
</feature>
<feature type="compositionally biased region" description="Basic and acidic residues" evidence="2">
    <location>
        <begin position="325"/>
        <end position="343"/>
    </location>
</feature>
<feature type="compositionally biased region" description="Basic and acidic residues" evidence="2">
    <location>
        <begin position="777"/>
        <end position="796"/>
    </location>
</feature>
<feature type="compositionally biased region" description="Low complexity" evidence="2">
    <location>
        <begin position="1738"/>
        <end position="1748"/>
    </location>
</feature>
<feature type="compositionally biased region" description="Low complexity" evidence="2">
    <location>
        <begin position="1816"/>
        <end position="1838"/>
    </location>
</feature>
<feature type="modified residue" description="Phosphoserine" evidence="6">
    <location>
        <position position="186"/>
    </location>
</feature>
<feature type="modified residue" description="Phosphoserine" evidence="6">
    <location>
        <position position="258"/>
    </location>
</feature>
<feature type="modified residue" description="Phosphoserine" evidence="6">
    <location>
        <position position="260"/>
    </location>
</feature>
<feature type="modified residue" description="Phosphoserine" evidence="6">
    <location>
        <position position="276"/>
    </location>
</feature>
<feature type="modified residue" description="Phosphothreonine" evidence="6">
    <location>
        <position position="288"/>
    </location>
</feature>
<feature type="modified residue" description="Phosphoserine" evidence="6">
    <location>
        <position position="295"/>
    </location>
</feature>
<feature type="modified residue" description="Phosphothreonine" evidence="6">
    <location>
        <position position="297"/>
    </location>
</feature>
<feature type="modified residue" description="Phosphoserine" evidence="6">
    <location>
        <position position="301"/>
    </location>
</feature>
<feature type="modified residue" description="Phosphoserine" evidence="6">
    <location>
        <position position="312"/>
    </location>
</feature>
<feature type="mutagenesis site" description="In vir2f; XX-specific lethal, interferes with sex determination and dosage compensation." evidence="4">
    <original>M</original>
    <variation>K</variation>
    <location>
        <position position="1283"/>
    </location>
</feature>
<feature type="mutagenesis site" description="In vir1ts; transforms XX animals into intersexes at 29 degrees Celsius." evidence="4">
    <original>E</original>
    <variation>K</variation>
    <location>
        <position position="1423"/>
    </location>
</feature>
<sequence>MADVDDGSELLFFDTFSHEEVTDINLDLVQFPKPVFITQVRIIPLGARVQADFPGGVRLGATNPSKFDLEFFVNDLGMPAASAFENLGLLRYNQNDCIHLDCSQEKIVTDGLVLRGWYSTITLAIYGIFTNSVTEPIASPTLPCEPVGPEIANLSGEVLLQEDVLKDEWQEPMQAELLTAHKGNVSDYDPEDMEYGMSRDHYHQHAEEQEQREMRRLRRSTHSTDHSPPPPRRSHTHSESNDREYIRCSRDKGSRDWSRSPEYSSHRSRRKRSERSRSVVDEHKWPRTPPASIDSPTRPRSPDTMDYEDEDSRSHYKMQSSHYRHSSESLHRGERDRDDEDRSCTPQEQFEPILSDDEIIGDDEEDDAVDAAAIAEYERELEAAAAAAPPAIDAFEPWQKPLLVFEGDMAAHFCKELETLKLLFKKLVLQTRCENVNAFSEEHGASVDEREQFVYLGEQLNNQLGYLAQHYKRRNFVLQQFFGNDELHLRQAANVLQIALSFQAACMQPQPAFKIRHIKLGARMAELLGSSEELFQHLLKEHKFDIFEAVFRLYHEPYMALSIKLQLLKAVYALLDTRMGIEHFMGAKNNGYQMIVEAIKTAKLTRTKYALQAIIKKLHLWEGLESVQIWCRRLFVDRIIIPGNRDQMEDTVITCQQIEFAFEMLMDALFSSQLSYLQPRRFLPVSKKFEVVTDPTAQRSFGNALQSYLGQNSLAESLLVMLANCKELPATTYLSMLDLMHTLLRSHVGIDYFVDDAFPVTQTIVAILLGLDEVPRNPEEKEEKAEKSDAEDKAMEVENEAVEAGGEKPTPPTADEEGKPVAAPISVPAPAAAPQVRPRPILRPVLPRLARLGIEMSYKVQTRYHLDAIAYAAAAPEYDAVKLATHMHAIYSQTCDPAGRQHTVEVLGLNNNLKIFMDLIKKEQRLQTQRQLSSPGTKYKSPVLSYAVDMVDACVRYCEQLDYLIEHGGVILELAKNHETFEPSVSAVLQEMYVYMKPLEAINVFVYDDIMPLVEVIGRSLDYLTTFPGDLIMAMRILRYLSISKPLAGQKAPPVTEELKHRFVALQLYAADGVQLCIQIMERLCAYFEQPGAHAPALMTIQGVHCCQIMLPTLQILRELLSYAILCRDGTYKDLTAIDHLVKVYYLLYYFPTRCQAGPEVEQCKMEVVQTLLAYTQPNEQDEESLHKSLWTLMIREVLKNVDGPAHFIPGLKLLAELLPLPLPMPQPLCDQLQQQHKQRLITERKLWSAHLHPQSGQIAKLVEALAPSSFPQLSELLQRVCMQLSDLAPNMTLLIAKTITELLCNEYQTSNCIPTTNLERLLRFSTRLCAFAPLKSSMLSILSGKFWELFQSLLALNEFNDVVSNCQEAVHRILDSFLDSGISLISHKSTASPALNLAAALPPKELIPRIIDAVFSNLTSVEVTHGISILAVRNLVILTEHDFTFYHLAQLLKQKITEFQAWMERVILHNETVEYNANIESLILLLRSLTQIEPPPAMSAMPHRTLKLGATELAQLVEFQDIELAKPPVLSRILTVMEKHKAVANEAALSDLKQLILLQASKQEILAGTSTETPPEAEGEANPSASSCSASLTVEPYLPQAEGIVTQYEARPIFTRFCATAENAQLTARYWLDPLPIELIEDMNEPIYERIACDLTDLANVCLNPDLNVAGDSKRVMNLSGSPQSNREMTPTAPCFRTRRVEVEPATGRPEKKMFVSSVRGRGFARPPPSRGDLFRSRPPNTSRPPSLHVDDFLALETCGAQPTGPTGYNKIPSMLRGSRVGRNRGSRISAAAAFRQKKMMRIGSPSSWAESPGSYRSASDSHFSSSDSHYSSPHYSGRPRGRGLRSRPSYLR</sequence>
<dbReference type="EMBL" id="AF281363">
    <property type="protein sequence ID" value="AAK12372.1"/>
    <property type="molecule type" value="Genomic_DNA"/>
</dbReference>
<dbReference type="EMBL" id="AE013599">
    <property type="protein sequence ID" value="AAF46988.1"/>
    <property type="molecule type" value="Genomic_DNA"/>
</dbReference>
<dbReference type="RefSeq" id="NP_524900.1">
    <property type="nucleotide sequence ID" value="NM_080161.2"/>
</dbReference>
<dbReference type="SMR" id="Q9W1R5"/>
<dbReference type="BioGRID" id="71017">
    <property type="interactions" value="21"/>
</dbReference>
<dbReference type="ComplexPortal" id="CPX-2344">
    <property type="entry name" value="N6-methyladenosine methyltransferase complex"/>
</dbReference>
<dbReference type="FunCoup" id="Q9W1R5">
    <property type="interactions" value="2570"/>
</dbReference>
<dbReference type="IntAct" id="Q9W1R5">
    <property type="interactions" value="8"/>
</dbReference>
<dbReference type="STRING" id="7227.FBpp0071946"/>
<dbReference type="GlyGen" id="Q9W1R5">
    <property type="glycosylation" value="1 site"/>
</dbReference>
<dbReference type="iPTMnet" id="Q9W1R5"/>
<dbReference type="PaxDb" id="7227-FBpp0071946"/>
<dbReference type="EnsemblMetazoa" id="FBtr0072037">
    <property type="protein sequence ID" value="FBpp0071946"/>
    <property type="gene ID" value="FBgn0003977"/>
</dbReference>
<dbReference type="GeneID" id="47869"/>
<dbReference type="KEGG" id="dme:Dmel_CG3496"/>
<dbReference type="UCSC" id="CG3496-RA">
    <property type="organism name" value="d. melanogaster"/>
</dbReference>
<dbReference type="AGR" id="FB:FBgn0003977"/>
<dbReference type="CTD" id="47869"/>
<dbReference type="FlyBase" id="FBgn0003977">
    <property type="gene designation" value="vir"/>
</dbReference>
<dbReference type="VEuPathDB" id="VectorBase:FBgn0003977"/>
<dbReference type="eggNOG" id="KOG4822">
    <property type="taxonomic scope" value="Eukaryota"/>
</dbReference>
<dbReference type="GeneTree" id="ENSGT00390000002833"/>
<dbReference type="HOGENOM" id="CLU_002368_0_0_1"/>
<dbReference type="InParanoid" id="Q9W1R5"/>
<dbReference type="OMA" id="YWLEPLP"/>
<dbReference type="OrthoDB" id="2011702at2759"/>
<dbReference type="PhylomeDB" id="Q9W1R5"/>
<dbReference type="BioGRID-ORCS" id="47869">
    <property type="hits" value="0 hits in 1 CRISPR screen"/>
</dbReference>
<dbReference type="GenomeRNAi" id="47869"/>
<dbReference type="PRO" id="PR:Q9W1R5"/>
<dbReference type="Proteomes" id="UP000000803">
    <property type="component" value="Chromosome 2R"/>
</dbReference>
<dbReference type="Bgee" id="FBgn0003977">
    <property type="expression patterns" value="Expressed in adult midgut enterocyte in digestive tract and 27 other cell types or tissues"/>
</dbReference>
<dbReference type="GO" id="GO:0005634">
    <property type="term" value="C:nucleus"/>
    <property type="evidence" value="ECO:0000314"/>
    <property type="project" value="UniProtKB"/>
</dbReference>
<dbReference type="GO" id="GO:0036396">
    <property type="term" value="C:RNA N6-methyladenosine methyltransferase complex"/>
    <property type="evidence" value="ECO:0000314"/>
    <property type="project" value="UniProtKB"/>
</dbReference>
<dbReference type="GO" id="GO:0030154">
    <property type="term" value="P:cell differentiation"/>
    <property type="evidence" value="ECO:0007669"/>
    <property type="project" value="UniProtKB-KW"/>
</dbReference>
<dbReference type="GO" id="GO:0006397">
    <property type="term" value="P:mRNA processing"/>
    <property type="evidence" value="ECO:0007669"/>
    <property type="project" value="UniProtKB-KW"/>
</dbReference>
<dbReference type="GO" id="GO:1903688">
    <property type="term" value="P:positive regulation of border follicle cell migration"/>
    <property type="evidence" value="ECO:0000315"/>
    <property type="project" value="FlyBase"/>
</dbReference>
<dbReference type="GO" id="GO:0007539">
    <property type="term" value="P:primary sex determination, soma"/>
    <property type="evidence" value="ECO:0000315"/>
    <property type="project" value="UniProtKB"/>
</dbReference>
<dbReference type="GO" id="GO:0000381">
    <property type="term" value="P:regulation of alternative mRNA splicing, via spliceosome"/>
    <property type="evidence" value="ECO:0000315"/>
    <property type="project" value="UniProtKB"/>
</dbReference>
<dbReference type="GO" id="GO:0048024">
    <property type="term" value="P:regulation of mRNA splicing, via spliceosome"/>
    <property type="evidence" value="ECO:0000304"/>
    <property type="project" value="FlyBase"/>
</dbReference>
<dbReference type="GO" id="GO:0000375">
    <property type="term" value="P:RNA splicing, via transesterification reactions"/>
    <property type="evidence" value="ECO:0000315"/>
    <property type="project" value="UniProtKB"/>
</dbReference>
<dbReference type="GO" id="GO:0007548">
    <property type="term" value="P:sex differentiation"/>
    <property type="evidence" value="ECO:0007669"/>
    <property type="project" value="UniProtKB-KW"/>
</dbReference>
<dbReference type="GO" id="GO:0007549">
    <property type="term" value="P:sex-chromosome dosage compensation"/>
    <property type="evidence" value="ECO:0000304"/>
    <property type="project" value="FlyBase"/>
</dbReference>
<dbReference type="InterPro" id="IPR031801">
    <property type="entry name" value="VIR_N"/>
</dbReference>
<dbReference type="InterPro" id="IPR026736">
    <property type="entry name" value="Virilizer"/>
</dbReference>
<dbReference type="PANTHER" id="PTHR23185">
    <property type="entry name" value="PROTEIN VIRILIZER HOMOLOG"/>
    <property type="match status" value="1"/>
</dbReference>
<dbReference type="PANTHER" id="PTHR23185:SF0">
    <property type="entry name" value="PROTEIN VIRILIZER HOMOLOG"/>
    <property type="match status" value="1"/>
</dbReference>
<dbReference type="Pfam" id="PF15912">
    <property type="entry name" value="VIR_N"/>
    <property type="match status" value="1"/>
</dbReference>
<name>VIR_DROME</name>
<protein>
    <recommendedName>
        <fullName evidence="10">Protein virilizer</fullName>
    </recommendedName>
</protein>
<keyword id="KW-0175">Coiled coil</keyword>
<keyword id="KW-0217">Developmental protein</keyword>
<keyword id="KW-0221">Differentiation</keyword>
<keyword id="KW-0507">mRNA processing</keyword>
<keyword id="KW-0508">mRNA splicing</keyword>
<keyword id="KW-0539">Nucleus</keyword>
<keyword id="KW-0597">Phosphoprotein</keyword>
<keyword id="KW-1185">Reference proteome</keyword>
<keyword id="KW-0726">Sexual differentiation</keyword>
<accession>Q9W1R5</accession>
<reference key="1">
    <citation type="journal article" date="2001" name="Genetics">
        <title>Molecular identification of virilizer, a gene required for the expression of the sex-determining gene Sex-lethal in Drosophila melanogaster.</title>
        <authorList>
            <person name="Niessen M."/>
            <person name="Schneiter R."/>
            <person name="Nothiger R."/>
        </authorList>
    </citation>
    <scope>NUCLEOTIDE SEQUENCE [GENOMIC DNA]</scope>
    <scope>FUNCTION</scope>
    <scope>SUBCELLULAR LOCATION</scope>
    <scope>MUTAGENESIS OF MET-1283 AND GLU-1423</scope>
    <scope>DEVELOPMENTAL STAGE</scope>
</reference>
<reference key="2">
    <citation type="journal article" date="2000" name="Science">
        <title>The genome sequence of Drosophila melanogaster.</title>
        <authorList>
            <person name="Adams M.D."/>
            <person name="Celniker S.E."/>
            <person name="Holt R.A."/>
            <person name="Evans C.A."/>
            <person name="Gocayne J.D."/>
            <person name="Amanatides P.G."/>
            <person name="Scherer S.E."/>
            <person name="Li P.W."/>
            <person name="Hoskins R.A."/>
            <person name="Galle R.F."/>
            <person name="George R.A."/>
            <person name="Lewis S.E."/>
            <person name="Richards S."/>
            <person name="Ashburner M."/>
            <person name="Henderson S.N."/>
            <person name="Sutton G.G."/>
            <person name="Wortman J.R."/>
            <person name="Yandell M.D."/>
            <person name="Zhang Q."/>
            <person name="Chen L.X."/>
            <person name="Brandon R.C."/>
            <person name="Rogers Y.-H.C."/>
            <person name="Blazej R.G."/>
            <person name="Champe M."/>
            <person name="Pfeiffer B.D."/>
            <person name="Wan K.H."/>
            <person name="Doyle C."/>
            <person name="Baxter E.G."/>
            <person name="Helt G."/>
            <person name="Nelson C.R."/>
            <person name="Miklos G.L.G."/>
            <person name="Abril J.F."/>
            <person name="Agbayani A."/>
            <person name="An H.-J."/>
            <person name="Andrews-Pfannkoch C."/>
            <person name="Baldwin D."/>
            <person name="Ballew R.M."/>
            <person name="Basu A."/>
            <person name="Baxendale J."/>
            <person name="Bayraktaroglu L."/>
            <person name="Beasley E.M."/>
            <person name="Beeson K.Y."/>
            <person name="Benos P.V."/>
            <person name="Berman B.P."/>
            <person name="Bhandari D."/>
            <person name="Bolshakov S."/>
            <person name="Borkova D."/>
            <person name="Botchan M.R."/>
            <person name="Bouck J."/>
            <person name="Brokstein P."/>
            <person name="Brottier P."/>
            <person name="Burtis K.C."/>
            <person name="Busam D.A."/>
            <person name="Butler H."/>
            <person name="Cadieu E."/>
            <person name="Center A."/>
            <person name="Chandra I."/>
            <person name="Cherry J.M."/>
            <person name="Cawley S."/>
            <person name="Dahlke C."/>
            <person name="Davenport L.B."/>
            <person name="Davies P."/>
            <person name="de Pablos B."/>
            <person name="Delcher A."/>
            <person name="Deng Z."/>
            <person name="Mays A.D."/>
            <person name="Dew I."/>
            <person name="Dietz S.M."/>
            <person name="Dodson K."/>
            <person name="Doup L.E."/>
            <person name="Downes M."/>
            <person name="Dugan-Rocha S."/>
            <person name="Dunkov B.C."/>
            <person name="Dunn P."/>
            <person name="Durbin K.J."/>
            <person name="Evangelista C.C."/>
            <person name="Ferraz C."/>
            <person name="Ferriera S."/>
            <person name="Fleischmann W."/>
            <person name="Fosler C."/>
            <person name="Gabrielian A.E."/>
            <person name="Garg N.S."/>
            <person name="Gelbart W.M."/>
            <person name="Glasser K."/>
            <person name="Glodek A."/>
            <person name="Gong F."/>
            <person name="Gorrell J.H."/>
            <person name="Gu Z."/>
            <person name="Guan P."/>
            <person name="Harris M."/>
            <person name="Harris N.L."/>
            <person name="Harvey D.A."/>
            <person name="Heiman T.J."/>
            <person name="Hernandez J.R."/>
            <person name="Houck J."/>
            <person name="Hostin D."/>
            <person name="Houston K.A."/>
            <person name="Howland T.J."/>
            <person name="Wei M.-H."/>
            <person name="Ibegwam C."/>
            <person name="Jalali M."/>
            <person name="Kalush F."/>
            <person name="Karpen G.H."/>
            <person name="Ke Z."/>
            <person name="Kennison J.A."/>
            <person name="Ketchum K.A."/>
            <person name="Kimmel B.E."/>
            <person name="Kodira C.D."/>
            <person name="Kraft C.L."/>
            <person name="Kravitz S."/>
            <person name="Kulp D."/>
            <person name="Lai Z."/>
            <person name="Lasko P."/>
            <person name="Lei Y."/>
            <person name="Levitsky A.A."/>
            <person name="Li J.H."/>
            <person name="Li Z."/>
            <person name="Liang Y."/>
            <person name="Lin X."/>
            <person name="Liu X."/>
            <person name="Mattei B."/>
            <person name="McIntosh T.C."/>
            <person name="McLeod M.P."/>
            <person name="McPherson D."/>
            <person name="Merkulov G."/>
            <person name="Milshina N.V."/>
            <person name="Mobarry C."/>
            <person name="Morris J."/>
            <person name="Moshrefi A."/>
            <person name="Mount S.M."/>
            <person name="Moy M."/>
            <person name="Murphy B."/>
            <person name="Murphy L."/>
            <person name="Muzny D.M."/>
            <person name="Nelson D.L."/>
            <person name="Nelson D.R."/>
            <person name="Nelson K.A."/>
            <person name="Nixon K."/>
            <person name="Nusskern D.R."/>
            <person name="Pacleb J.M."/>
            <person name="Palazzolo M."/>
            <person name="Pittman G.S."/>
            <person name="Pan S."/>
            <person name="Pollard J."/>
            <person name="Puri V."/>
            <person name="Reese M.G."/>
            <person name="Reinert K."/>
            <person name="Remington K."/>
            <person name="Saunders R.D.C."/>
            <person name="Scheeler F."/>
            <person name="Shen H."/>
            <person name="Shue B.C."/>
            <person name="Siden-Kiamos I."/>
            <person name="Simpson M."/>
            <person name="Skupski M.P."/>
            <person name="Smith T.J."/>
            <person name="Spier E."/>
            <person name="Spradling A.C."/>
            <person name="Stapleton M."/>
            <person name="Strong R."/>
            <person name="Sun E."/>
            <person name="Svirskas R."/>
            <person name="Tector C."/>
            <person name="Turner R."/>
            <person name="Venter E."/>
            <person name="Wang A.H."/>
            <person name="Wang X."/>
            <person name="Wang Z.-Y."/>
            <person name="Wassarman D.A."/>
            <person name="Weinstock G.M."/>
            <person name="Weissenbach J."/>
            <person name="Williams S.M."/>
            <person name="Woodage T."/>
            <person name="Worley K.C."/>
            <person name="Wu D."/>
            <person name="Yang S."/>
            <person name="Yao Q.A."/>
            <person name="Ye J."/>
            <person name="Yeh R.-F."/>
            <person name="Zaveri J.S."/>
            <person name="Zhan M."/>
            <person name="Zhang G."/>
            <person name="Zhao Q."/>
            <person name="Zheng L."/>
            <person name="Zheng X.H."/>
            <person name="Zhong F.N."/>
            <person name="Zhong W."/>
            <person name="Zhou X."/>
            <person name="Zhu S.C."/>
            <person name="Zhu X."/>
            <person name="Smith H.O."/>
            <person name="Gibbs R.A."/>
            <person name="Myers E.W."/>
            <person name="Rubin G.M."/>
            <person name="Venter J.C."/>
        </authorList>
    </citation>
    <scope>NUCLEOTIDE SEQUENCE [LARGE SCALE GENOMIC DNA]</scope>
    <source>
        <strain>Berkeley</strain>
    </source>
</reference>
<reference key="3">
    <citation type="journal article" date="2002" name="Genome Biol.">
        <title>Annotation of the Drosophila melanogaster euchromatic genome: a systematic review.</title>
        <authorList>
            <person name="Misra S."/>
            <person name="Crosby M.A."/>
            <person name="Mungall C.J."/>
            <person name="Matthews B.B."/>
            <person name="Campbell K.S."/>
            <person name="Hradecky P."/>
            <person name="Huang Y."/>
            <person name="Kaminker J.S."/>
            <person name="Millburn G.H."/>
            <person name="Prochnik S.E."/>
            <person name="Smith C.D."/>
            <person name="Tupy J.L."/>
            <person name="Whitfield E.J."/>
            <person name="Bayraktaroglu L."/>
            <person name="Berman B.P."/>
            <person name="Bettencourt B.R."/>
            <person name="Celniker S.E."/>
            <person name="de Grey A.D.N.J."/>
            <person name="Drysdale R.A."/>
            <person name="Harris N.L."/>
            <person name="Richter J."/>
            <person name="Russo S."/>
            <person name="Schroeder A.J."/>
            <person name="Shu S.Q."/>
            <person name="Stapleton M."/>
            <person name="Yamada C."/>
            <person name="Ashburner M."/>
            <person name="Gelbart W.M."/>
            <person name="Rubin G.M."/>
            <person name="Lewis S.E."/>
        </authorList>
    </citation>
    <scope>GENOME REANNOTATION</scope>
    <source>
        <strain>Berkeley</strain>
    </source>
</reference>
<reference key="4">
    <citation type="journal article" date="1995" name="Development">
        <title>The gene virilizer is required for female-specific splicing controlled by Sxl, the master gene for sexual development in Drosophila.</title>
        <authorList>
            <person name="Hilfiker A."/>
            <person name="Amrein H."/>
            <person name="Dubendorfer A."/>
            <person name="Schneiter R."/>
            <person name="Nothiger R."/>
        </authorList>
    </citation>
    <scope>FUNCTION</scope>
</reference>
<reference key="5">
    <citation type="journal article" date="1999" name="Genetics">
        <title>Trans-acting factors required for inclusion of regulated exons in the Ultrabithorax mRNAs of Drosophila melanogaster.</title>
        <authorList>
            <person name="Burnette J.M."/>
            <person name="Hatton A.R."/>
            <person name="Lopez A.J."/>
        </authorList>
    </citation>
    <scope>FUNCTION</scope>
</reference>
<reference key="6">
    <citation type="journal article" date="2003" name="J. Biol. Chem.">
        <title>Biochemical function of female-lethal (2)D/Wilms' tumor suppressor-1-associated proteins in alternative pre-mRNA splicing.</title>
        <authorList>
            <person name="Ortega A."/>
            <person name="Niksic M."/>
            <person name="Bachi A."/>
            <person name="Wilm M."/>
            <person name="Sanchez L."/>
            <person name="Hastie N."/>
            <person name="Valcarcel J."/>
        </authorList>
    </citation>
    <scope>INTERACTION WITH FL(2)D</scope>
    <scope>IDENTIFICATION IN COMPLEX WITH FL(2)D AND SXL</scope>
    <scope>IDENTIFICATION BY MASS SPECTROMETRY</scope>
</reference>
<reference key="7">
    <citation type="journal article" date="2008" name="J. Proteome Res.">
        <title>Phosphoproteome analysis of Drosophila melanogaster embryos.</title>
        <authorList>
            <person name="Zhai B."/>
            <person name="Villen J."/>
            <person name="Beausoleil S.A."/>
            <person name="Mintseris J."/>
            <person name="Gygi S.P."/>
        </authorList>
    </citation>
    <scope>PHOSPHORYLATION [LARGE SCALE ANALYSIS] AT SER-186; SER-258; SER-260; SER-276; THR-288; SER-295; THR-297; SER-301 AND SER-312</scope>
    <scope>IDENTIFICATION BY MASS SPECTROMETRY</scope>
    <source>
        <tissue>Embryo</tissue>
    </source>
</reference>
<reference key="8">
    <citation type="journal article" date="2016" name="Nature">
        <title>m(6)A modulates neuronal functions and sex determination in Drosophila.</title>
        <authorList>
            <person name="Lence T."/>
            <person name="Akhtar J."/>
            <person name="Bayer M."/>
            <person name="Schmid K."/>
            <person name="Spindler L."/>
            <person name="Ho C.H."/>
            <person name="Kreim N."/>
            <person name="Andrade-Navarro M.A."/>
            <person name="Poeck B."/>
            <person name="Helm M."/>
            <person name="Roignant J.Y."/>
        </authorList>
    </citation>
    <scope>SUBCELLULAR LOCATION</scope>
    <scope>DEVELOPMENTAL STAGE</scope>
    <scope>IDENTIFICATION IN THE WMM COMPLEX</scope>
</reference>
<reference key="9">
    <citation type="journal article" date="2018" name="Genes Dev.">
        <title>Zc3h13/Flacc is required for adenosine methylation by bridging the mRNA-binding factor Rbm15/Spenito to the m6A machinery component Wtap/Fl(2)d.</title>
        <authorList>
            <person name="Knuckles P."/>
            <person name="Lence T."/>
            <person name="Haussmann I.U."/>
            <person name="Jacob D."/>
            <person name="Kreim N."/>
            <person name="Carl S.H."/>
            <person name="Masiello I."/>
            <person name="Hares T."/>
            <person name="Villasenor R."/>
            <person name="Hess D."/>
            <person name="Andrade-Navarro M.A."/>
            <person name="Biggiogera M."/>
            <person name="Helm M."/>
            <person name="Soller M."/>
            <person name="Buehler M."/>
            <person name="Roignant J.Y."/>
        </authorList>
    </citation>
    <scope>IDENTIFICATION IN THE WMM COMPLEX</scope>
</reference>
<reference key="10">
    <citation type="journal article" date="2018" name="Proc. Natl. Acad. Sci. U.S.A.">
        <title>Xio is a component of the Drosophila sex determination pathway and RNA N6-methyladenosine-methyladenosine methyltransferase complex.</title>
        <authorList>
            <person name="Guo J."/>
            <person name="Tang H.W."/>
            <person name="Li J."/>
            <person name="Perrimon N."/>
            <person name="Yan D."/>
        </authorList>
    </citation>
    <scope>IDENTIFICATION IN THE WMM COMPLEX</scope>
</reference>
<comment type="function">
    <text evidence="3 4 12">Associated component of the WMM complex, a complex that mediates N6-methyladenosine (m6A) methylation of mRNAs, a modification that plays a role in the efficiency of mRNA splicing and is required for sex determination (PubMed:27919077). Required for sex determination and dosage compensation via Sxl alternative splicing: m6A methylation acts as a key regulator of Sxl pre-mRNA and promotes female-specific alternative splicing of Sxl, which determines female physiognomy (PubMed:11156988, PubMed:27919077). M6A methylation is also required for neuronal functions (PubMed:27919077). Required for proper inclusion of regulated exons in Ubx transcripts, leading to isoforms Ia/b and IIa/b (PubMed:10101174).</text>
</comment>
<comment type="subunit">
    <text evidence="5 7 8 9">Component of the WMM complex, a N6-methyltransferase complex composed of a catalytic subcomplex, named MAC, and of an associated subcomplex, named MACOM (PubMed:27919077, PubMed:29535189, PubMed:29555755). The MAC subcomplex is composed of Ime4/Mettl3 and Mettl14 (PubMed:29535189, PubMed:29555755). The MACOM subcomplex is composed of fl(2)d, Flacc/Xio, Hakai, vir, and, in some cases of nito (PubMed:27919077, PubMed:29535189, PubMed:29555755). Part of a complex containing fl(2)d, Sxl and vir (PubMed:12444081).</text>
</comment>
<comment type="subcellular location">
    <subcellularLocation>
        <location evidence="4 7">Nucleus</location>
    </subcellularLocation>
</comment>
<comment type="developmental stage">
    <text evidence="4 7">Ubiquitously expressed in males and females throughout embryogenesis (PubMed:11156988, PubMed:27919077). Expression levels decrease from gastrulation toward late embryogenesis (PubMed:11156988). Enriched in the neuroectoderm at later stages (PubMed:27919077).</text>
</comment>
<comment type="similarity">
    <text evidence="11">Belongs to the vir family.</text>
</comment>
<evidence type="ECO:0000255" key="1"/>
<evidence type="ECO:0000256" key="2">
    <source>
        <dbReference type="SAM" id="MobiDB-lite"/>
    </source>
</evidence>
<evidence type="ECO:0000269" key="3">
    <source>
    </source>
</evidence>
<evidence type="ECO:0000269" key="4">
    <source>
    </source>
</evidence>
<evidence type="ECO:0000269" key="5">
    <source>
    </source>
</evidence>
<evidence type="ECO:0000269" key="6">
    <source>
    </source>
</evidence>
<evidence type="ECO:0000269" key="7">
    <source>
    </source>
</evidence>
<evidence type="ECO:0000269" key="8">
    <source>
    </source>
</evidence>
<evidence type="ECO:0000269" key="9">
    <source>
    </source>
</evidence>
<evidence type="ECO:0000303" key="10">
    <source>
    </source>
</evidence>
<evidence type="ECO:0000305" key="11"/>
<evidence type="ECO:0000305" key="12">
    <source>
    </source>
</evidence>
<evidence type="ECO:0000312" key="13">
    <source>
        <dbReference type="FlyBase" id="FBgn0003977"/>
    </source>
</evidence>
<proteinExistence type="evidence at protein level"/>
<organism>
    <name type="scientific">Drosophila melanogaster</name>
    <name type="common">Fruit fly</name>
    <dbReference type="NCBI Taxonomy" id="7227"/>
    <lineage>
        <taxon>Eukaryota</taxon>
        <taxon>Metazoa</taxon>
        <taxon>Ecdysozoa</taxon>
        <taxon>Arthropoda</taxon>
        <taxon>Hexapoda</taxon>
        <taxon>Insecta</taxon>
        <taxon>Pterygota</taxon>
        <taxon>Neoptera</taxon>
        <taxon>Endopterygota</taxon>
        <taxon>Diptera</taxon>
        <taxon>Brachycera</taxon>
        <taxon>Muscomorpha</taxon>
        <taxon>Ephydroidea</taxon>
        <taxon>Drosophilidae</taxon>
        <taxon>Drosophila</taxon>
        <taxon>Sophophora</taxon>
    </lineage>
</organism>
<gene>
    <name evidence="10 13" type="primary">vir</name>
    <name evidence="13" type="ORF">CG3496</name>
</gene>